<sequence>MAMLGLVLSVLTTILALSEARIPGVYNGGGWETAHATFYGGSDASGTMGGACGYGNLYSQGYGVNTAALSTALFNNGFSCGACFELKCASDPKWCHSGSPSIFITATNFCPPNFAQPSDNGGWCNPPRPHFDLAMPMFLKIAEYRAGIVPVSFRRVPCRKRGGIRFTINGFRYFNLVLVTNVAGAGNIVRLGVKGTHTSWMTMSRNWGQNWQSNSVLVGQSLSFRVTSSDRRSSTSWNIAPANWKFGQTFMGKNFRV</sequence>
<comment type="function">
    <text evidence="1">Causes loosening and extension of plant cell walls by disrupting non-covalent bonding between cellulose microfibrils and matrix glucans. No enzymatic activity has been found (By similarity).</text>
</comment>
<comment type="subcellular location">
    <subcellularLocation>
        <location>Secreted</location>
        <location>Cell wall</location>
    </subcellularLocation>
    <subcellularLocation>
        <location>Membrane</location>
        <topology>Peripheral membrane protein</topology>
    </subcellularLocation>
</comment>
<comment type="similarity">
    <text evidence="5">Belongs to the expansin family. Expansin A subfamily.</text>
</comment>
<comment type="online information" name="EXPANSIN homepage">
    <link uri="https://www.dept.psu.edu/biology/groups/expansins/index.htm"/>
</comment>
<gene>
    <name type="primary">EXPA6</name>
    <name type="synonym">EXP6</name>
    <name type="ordered locus">At2g28950</name>
    <name type="ORF">T9I4.3</name>
</gene>
<organism>
    <name type="scientific">Arabidopsis thaliana</name>
    <name type="common">Mouse-ear cress</name>
    <dbReference type="NCBI Taxonomy" id="3702"/>
    <lineage>
        <taxon>Eukaryota</taxon>
        <taxon>Viridiplantae</taxon>
        <taxon>Streptophyta</taxon>
        <taxon>Embryophyta</taxon>
        <taxon>Tracheophyta</taxon>
        <taxon>Spermatophyta</taxon>
        <taxon>Magnoliopsida</taxon>
        <taxon>eudicotyledons</taxon>
        <taxon>Gunneridae</taxon>
        <taxon>Pentapetalae</taxon>
        <taxon>rosids</taxon>
        <taxon>malvids</taxon>
        <taxon>Brassicales</taxon>
        <taxon>Brassicaceae</taxon>
        <taxon>Camelineae</taxon>
        <taxon>Arabidopsis</taxon>
    </lineage>
</organism>
<name>EXPA6_ARATH</name>
<accession>Q38865</accession>
<accession>O81065</accession>
<accession>Q8LDV8</accession>
<reference key="1">
    <citation type="journal article" date="1995" name="Proc. Natl. Acad. Sci. U.S.A.">
        <title>Molecular cloning and sequence analysis of expansins - a highly conserved, multigene family of proteins that mediate cell wall extension in plants.</title>
        <authorList>
            <person name="Shcherban T.Y."/>
            <person name="Shi J."/>
            <person name="Durachko D.M."/>
            <person name="Guiltinan M.J."/>
            <person name="McQueen-Mason S.J."/>
            <person name="Shieh M."/>
            <person name="Cosgrove D.J."/>
        </authorList>
    </citation>
    <scope>NUCLEOTIDE SEQUENCE [MRNA]</scope>
    <source>
        <strain>cv. Columbia</strain>
    </source>
</reference>
<reference key="2">
    <citation type="submission" date="2001-12" db="EMBL/GenBank/DDBJ databases">
        <authorList>
            <person name="Cosgrove D.J."/>
        </authorList>
    </citation>
    <scope>SEQUENCE REVISION TO 10-11</scope>
</reference>
<reference key="3">
    <citation type="journal article" date="1999" name="Nature">
        <title>Sequence and analysis of chromosome 2 of the plant Arabidopsis thaliana.</title>
        <authorList>
            <person name="Lin X."/>
            <person name="Kaul S."/>
            <person name="Rounsley S.D."/>
            <person name="Shea T.P."/>
            <person name="Benito M.-I."/>
            <person name="Town C.D."/>
            <person name="Fujii C.Y."/>
            <person name="Mason T.M."/>
            <person name="Bowman C.L."/>
            <person name="Barnstead M.E."/>
            <person name="Feldblyum T.V."/>
            <person name="Buell C.R."/>
            <person name="Ketchum K.A."/>
            <person name="Lee J.J."/>
            <person name="Ronning C.M."/>
            <person name="Koo H.L."/>
            <person name="Moffat K.S."/>
            <person name="Cronin L.A."/>
            <person name="Shen M."/>
            <person name="Pai G."/>
            <person name="Van Aken S."/>
            <person name="Umayam L."/>
            <person name="Tallon L.J."/>
            <person name="Gill J.E."/>
            <person name="Adams M.D."/>
            <person name="Carrera A.J."/>
            <person name="Creasy T.H."/>
            <person name="Goodman H.M."/>
            <person name="Somerville C.R."/>
            <person name="Copenhaver G.P."/>
            <person name="Preuss D."/>
            <person name="Nierman W.C."/>
            <person name="White O."/>
            <person name="Eisen J.A."/>
            <person name="Salzberg S.L."/>
            <person name="Fraser C.M."/>
            <person name="Venter J.C."/>
        </authorList>
    </citation>
    <scope>NUCLEOTIDE SEQUENCE [LARGE SCALE GENOMIC DNA]</scope>
    <source>
        <strain>cv. Columbia</strain>
    </source>
</reference>
<reference key="4">
    <citation type="journal article" date="2017" name="Plant J.">
        <title>Araport11: a complete reannotation of the Arabidopsis thaliana reference genome.</title>
        <authorList>
            <person name="Cheng C.Y."/>
            <person name="Krishnakumar V."/>
            <person name="Chan A.P."/>
            <person name="Thibaud-Nissen F."/>
            <person name="Schobel S."/>
            <person name="Town C.D."/>
        </authorList>
    </citation>
    <scope>GENOME REANNOTATION</scope>
    <source>
        <strain>cv. Columbia</strain>
    </source>
</reference>
<reference key="5">
    <citation type="journal article" date="2003" name="Science">
        <title>Empirical analysis of transcriptional activity in the Arabidopsis genome.</title>
        <authorList>
            <person name="Yamada K."/>
            <person name="Lim J."/>
            <person name="Dale J.M."/>
            <person name="Chen H."/>
            <person name="Shinn P."/>
            <person name="Palm C.J."/>
            <person name="Southwick A.M."/>
            <person name="Wu H.C."/>
            <person name="Kim C.J."/>
            <person name="Nguyen M."/>
            <person name="Pham P.K."/>
            <person name="Cheuk R.F."/>
            <person name="Karlin-Newmann G."/>
            <person name="Liu S.X."/>
            <person name="Lam B."/>
            <person name="Sakano H."/>
            <person name="Wu T."/>
            <person name="Yu G."/>
            <person name="Miranda M."/>
            <person name="Quach H.L."/>
            <person name="Tripp M."/>
            <person name="Chang C.H."/>
            <person name="Lee J.M."/>
            <person name="Toriumi M.J."/>
            <person name="Chan M.M."/>
            <person name="Tang C.C."/>
            <person name="Onodera C.S."/>
            <person name="Deng J.M."/>
            <person name="Akiyama K."/>
            <person name="Ansari Y."/>
            <person name="Arakawa T."/>
            <person name="Banh J."/>
            <person name="Banno F."/>
            <person name="Bowser L."/>
            <person name="Brooks S.Y."/>
            <person name="Carninci P."/>
            <person name="Chao Q."/>
            <person name="Choy N."/>
            <person name="Enju A."/>
            <person name="Goldsmith A.D."/>
            <person name="Gurjal M."/>
            <person name="Hansen N.F."/>
            <person name="Hayashizaki Y."/>
            <person name="Johnson-Hopson C."/>
            <person name="Hsuan V.W."/>
            <person name="Iida K."/>
            <person name="Karnes M."/>
            <person name="Khan S."/>
            <person name="Koesema E."/>
            <person name="Ishida J."/>
            <person name="Jiang P.X."/>
            <person name="Jones T."/>
            <person name="Kawai J."/>
            <person name="Kamiya A."/>
            <person name="Meyers C."/>
            <person name="Nakajima M."/>
            <person name="Narusaka M."/>
            <person name="Seki M."/>
            <person name="Sakurai T."/>
            <person name="Satou M."/>
            <person name="Tamse R."/>
            <person name="Vaysberg M."/>
            <person name="Wallender E.K."/>
            <person name="Wong C."/>
            <person name="Yamamura Y."/>
            <person name="Yuan S."/>
            <person name="Shinozaki K."/>
            <person name="Davis R.W."/>
            <person name="Theologis A."/>
            <person name="Ecker J.R."/>
        </authorList>
    </citation>
    <scope>NUCLEOTIDE SEQUENCE [LARGE SCALE MRNA]</scope>
    <source>
        <strain>cv. Columbia</strain>
    </source>
</reference>
<reference key="6">
    <citation type="journal article" date="2004" name="Plant Mol. Biol.">
        <title>Nomenclature for members of the expansin superfamily of genes and proteins.</title>
        <authorList>
            <person name="Kende H."/>
            <person name="Bradford K.J."/>
            <person name="Brummell D.A."/>
            <person name="Cho H.-T."/>
            <person name="Cosgrove D.J."/>
            <person name="Fleming A.J."/>
            <person name="Gehring C."/>
            <person name="Lee Y."/>
            <person name="McQueen-Mason S.J."/>
            <person name="Rose J.K.C."/>
            <person name="Voesenek L.A.C."/>
        </authorList>
    </citation>
    <scope>NOMENCLATURE</scope>
</reference>
<dbReference type="EMBL" id="U30480">
    <property type="protein sequence ID" value="AAB38072.2"/>
    <property type="molecule type" value="mRNA"/>
</dbReference>
<dbReference type="EMBL" id="AC005315">
    <property type="protein sequence ID" value="AAC33223.1"/>
    <property type="molecule type" value="Genomic_DNA"/>
</dbReference>
<dbReference type="EMBL" id="AC005727">
    <property type="protein sequence ID" value="AAM15074.1"/>
    <property type="molecule type" value="Genomic_DNA"/>
</dbReference>
<dbReference type="EMBL" id="CP002685">
    <property type="protein sequence ID" value="AEC08194.1"/>
    <property type="molecule type" value="Genomic_DNA"/>
</dbReference>
<dbReference type="EMBL" id="AY058193">
    <property type="protein sequence ID" value="AAL25606.1"/>
    <property type="molecule type" value="mRNA"/>
</dbReference>
<dbReference type="EMBL" id="AY072409">
    <property type="protein sequence ID" value="AAL62401.1"/>
    <property type="molecule type" value="mRNA"/>
</dbReference>
<dbReference type="EMBL" id="AY085770">
    <property type="protein sequence ID" value="AAM62987.1"/>
    <property type="molecule type" value="mRNA"/>
</dbReference>
<dbReference type="EMBL" id="BT003405">
    <property type="protein sequence ID" value="AAO30068.1"/>
    <property type="molecule type" value="mRNA"/>
</dbReference>
<dbReference type="PIR" id="T02727">
    <property type="entry name" value="T02727"/>
</dbReference>
<dbReference type="PIR" id="T50653">
    <property type="entry name" value="T50653"/>
</dbReference>
<dbReference type="RefSeq" id="NP_180461.1">
    <property type="nucleotide sequence ID" value="NM_128454.3"/>
</dbReference>
<dbReference type="SMR" id="Q38865"/>
<dbReference type="FunCoup" id="Q38865">
    <property type="interactions" value="47"/>
</dbReference>
<dbReference type="STRING" id="3702.Q38865"/>
<dbReference type="PaxDb" id="3702-AT2G28950.1"/>
<dbReference type="ProteomicsDB" id="222241"/>
<dbReference type="EnsemblPlants" id="AT2G28950.1">
    <property type="protein sequence ID" value="AT2G28950.1"/>
    <property type="gene ID" value="AT2G28950"/>
</dbReference>
<dbReference type="GeneID" id="817444"/>
<dbReference type="Gramene" id="AT2G28950.1">
    <property type="protein sequence ID" value="AT2G28950.1"/>
    <property type="gene ID" value="AT2G28950"/>
</dbReference>
<dbReference type="KEGG" id="ath:AT2G28950"/>
<dbReference type="Araport" id="AT2G28950"/>
<dbReference type="TAIR" id="AT2G28950">
    <property type="gene designation" value="EXPA6"/>
</dbReference>
<dbReference type="eggNOG" id="ENOG502QR06">
    <property type="taxonomic scope" value="Eukaryota"/>
</dbReference>
<dbReference type="HOGENOM" id="CLU_027462_0_1_1"/>
<dbReference type="InParanoid" id="Q38865"/>
<dbReference type="OMA" id="GTHTSWM"/>
<dbReference type="OrthoDB" id="5823761at2759"/>
<dbReference type="PhylomeDB" id="Q38865"/>
<dbReference type="PRO" id="PR:Q38865"/>
<dbReference type="Proteomes" id="UP000006548">
    <property type="component" value="Chromosome 2"/>
</dbReference>
<dbReference type="ExpressionAtlas" id="Q38865">
    <property type="expression patterns" value="baseline and differential"/>
</dbReference>
<dbReference type="GO" id="GO:0005576">
    <property type="term" value="C:extracellular region"/>
    <property type="evidence" value="ECO:0007669"/>
    <property type="project" value="UniProtKB-KW"/>
</dbReference>
<dbReference type="GO" id="GO:0016020">
    <property type="term" value="C:membrane"/>
    <property type="evidence" value="ECO:0007669"/>
    <property type="project" value="UniProtKB-SubCell"/>
</dbReference>
<dbReference type="GO" id="GO:0009505">
    <property type="term" value="C:plant-type cell wall"/>
    <property type="evidence" value="ECO:0007005"/>
    <property type="project" value="TAIR"/>
</dbReference>
<dbReference type="GO" id="GO:0009828">
    <property type="term" value="P:plant-type cell wall loosening"/>
    <property type="evidence" value="ECO:0000250"/>
    <property type="project" value="UniProtKB"/>
</dbReference>
<dbReference type="GO" id="GO:0006949">
    <property type="term" value="P:syncytium formation"/>
    <property type="evidence" value="ECO:0000270"/>
    <property type="project" value="TAIR"/>
</dbReference>
<dbReference type="CDD" id="cd22274">
    <property type="entry name" value="DPBB_EXPA_N"/>
    <property type="match status" value="1"/>
</dbReference>
<dbReference type="FunFam" id="2.40.40.10:FF:000001">
    <property type="entry name" value="Expansin"/>
    <property type="match status" value="1"/>
</dbReference>
<dbReference type="FunFam" id="2.60.40.760:FF:000001">
    <property type="entry name" value="Expansin"/>
    <property type="match status" value="1"/>
</dbReference>
<dbReference type="Gene3D" id="2.60.40.760">
    <property type="entry name" value="Expansin, cellulose-binding-like domain"/>
    <property type="match status" value="1"/>
</dbReference>
<dbReference type="Gene3D" id="2.40.40.10">
    <property type="entry name" value="RlpA-like domain"/>
    <property type="match status" value="1"/>
</dbReference>
<dbReference type="InterPro" id="IPR007118">
    <property type="entry name" value="Expan_Lol_pI"/>
</dbReference>
<dbReference type="InterPro" id="IPR002963">
    <property type="entry name" value="Expansin"/>
</dbReference>
<dbReference type="InterPro" id="IPR007112">
    <property type="entry name" value="Expansin/allergen_DPBB_dom"/>
</dbReference>
<dbReference type="InterPro" id="IPR007117">
    <property type="entry name" value="Expansin_CBD"/>
</dbReference>
<dbReference type="InterPro" id="IPR036749">
    <property type="entry name" value="Expansin_CBD_sf"/>
</dbReference>
<dbReference type="InterPro" id="IPR009009">
    <property type="entry name" value="RlpA-like_DPBB"/>
</dbReference>
<dbReference type="InterPro" id="IPR036908">
    <property type="entry name" value="RlpA-like_sf"/>
</dbReference>
<dbReference type="PANTHER" id="PTHR31867">
    <property type="entry name" value="EXPANSIN-A15"/>
    <property type="match status" value="1"/>
</dbReference>
<dbReference type="Pfam" id="PF03330">
    <property type="entry name" value="DPBB_1"/>
    <property type="match status" value="1"/>
</dbReference>
<dbReference type="Pfam" id="PF01357">
    <property type="entry name" value="Expansin_C"/>
    <property type="match status" value="1"/>
</dbReference>
<dbReference type="PRINTS" id="PR01226">
    <property type="entry name" value="EXPANSIN"/>
</dbReference>
<dbReference type="PRINTS" id="PR01225">
    <property type="entry name" value="EXPANSNFAMLY"/>
</dbReference>
<dbReference type="SMART" id="SM00837">
    <property type="entry name" value="DPBB_1"/>
    <property type="match status" value="1"/>
</dbReference>
<dbReference type="SUPFAM" id="SSF50685">
    <property type="entry name" value="Barwin-like endoglucanases"/>
    <property type="match status" value="1"/>
</dbReference>
<dbReference type="SUPFAM" id="SSF49590">
    <property type="entry name" value="PHL pollen allergen"/>
    <property type="match status" value="1"/>
</dbReference>
<dbReference type="PROSITE" id="PS50843">
    <property type="entry name" value="EXPANSIN_CBD"/>
    <property type="match status" value="1"/>
</dbReference>
<dbReference type="PROSITE" id="PS50842">
    <property type="entry name" value="EXPANSIN_EG45"/>
    <property type="match status" value="1"/>
</dbReference>
<proteinExistence type="evidence at transcript level"/>
<protein>
    <recommendedName>
        <fullName>Expansin-A6</fullName>
        <shortName>AtEXPA6</shortName>
    </recommendedName>
    <alternativeName>
        <fullName>Alpha-expansin-6</fullName>
        <shortName>At-EXP6</shortName>
        <shortName>AtEx6</shortName>
    </alternativeName>
    <alternativeName>
        <fullName>Ath-ExpAlpha-1.8</fullName>
    </alternativeName>
</protein>
<feature type="signal peptide" evidence="2">
    <location>
        <begin position="1"/>
        <end position="20"/>
    </location>
</feature>
<feature type="chain" id="PRO_0000008687" description="Expansin-A6">
    <location>
        <begin position="21"/>
        <end position="257"/>
    </location>
</feature>
<feature type="domain" description="Expansin-like EG45" evidence="4">
    <location>
        <begin position="49"/>
        <end position="163"/>
    </location>
</feature>
<feature type="domain" description="Expansin-like CBD" evidence="3">
    <location>
        <begin position="173"/>
        <end position="252"/>
    </location>
</feature>
<feature type="disulfide bond" evidence="4">
    <location>
        <begin position="52"/>
        <end position="80"/>
    </location>
</feature>
<feature type="disulfide bond" evidence="4">
    <location>
        <begin position="83"/>
        <end position="158"/>
    </location>
</feature>
<feature type="disulfide bond" evidence="4">
    <location>
        <begin position="88"/>
        <end position="95"/>
    </location>
</feature>
<evidence type="ECO:0000250" key="1"/>
<evidence type="ECO:0000255" key="2"/>
<evidence type="ECO:0000255" key="3">
    <source>
        <dbReference type="PROSITE-ProRule" id="PRU00078"/>
    </source>
</evidence>
<evidence type="ECO:0000255" key="4">
    <source>
        <dbReference type="PROSITE-ProRule" id="PRU00079"/>
    </source>
</evidence>
<evidence type="ECO:0000305" key="5"/>
<keyword id="KW-0134">Cell wall</keyword>
<keyword id="KW-0961">Cell wall biogenesis/degradation</keyword>
<keyword id="KW-1015">Disulfide bond</keyword>
<keyword id="KW-0472">Membrane</keyword>
<keyword id="KW-1185">Reference proteome</keyword>
<keyword id="KW-0964">Secreted</keyword>
<keyword id="KW-0732">Signal</keyword>